<gene>
    <name evidence="1" type="primary">ttcA</name>
    <name type="ordered locus">PA14_48870</name>
</gene>
<evidence type="ECO:0000255" key="1">
    <source>
        <dbReference type="HAMAP-Rule" id="MF_01850"/>
    </source>
</evidence>
<accession>Q02J28</accession>
<organism>
    <name type="scientific">Pseudomonas aeruginosa (strain UCBPP-PA14)</name>
    <dbReference type="NCBI Taxonomy" id="208963"/>
    <lineage>
        <taxon>Bacteria</taxon>
        <taxon>Pseudomonadati</taxon>
        <taxon>Pseudomonadota</taxon>
        <taxon>Gammaproteobacteria</taxon>
        <taxon>Pseudomonadales</taxon>
        <taxon>Pseudomonadaceae</taxon>
        <taxon>Pseudomonas</taxon>
    </lineage>
</organism>
<feature type="chain" id="PRO_0000348793" description="tRNA-cytidine(32) 2-sulfurtransferase">
    <location>
        <begin position="1"/>
        <end position="274"/>
    </location>
</feature>
<feature type="short sequence motif" description="PP-loop motif" evidence="1">
    <location>
        <begin position="40"/>
        <end position="45"/>
    </location>
</feature>
<feature type="binding site" evidence="1">
    <location>
        <position position="115"/>
    </location>
    <ligand>
        <name>[4Fe-4S] cluster</name>
        <dbReference type="ChEBI" id="CHEBI:49883"/>
    </ligand>
</feature>
<feature type="binding site" evidence="1">
    <location>
        <position position="118"/>
    </location>
    <ligand>
        <name>[4Fe-4S] cluster</name>
        <dbReference type="ChEBI" id="CHEBI:49883"/>
    </ligand>
</feature>
<feature type="binding site" evidence="1">
    <location>
        <position position="206"/>
    </location>
    <ligand>
        <name>[4Fe-4S] cluster</name>
        <dbReference type="ChEBI" id="CHEBI:49883"/>
    </ligand>
</feature>
<comment type="function">
    <text evidence="1">Catalyzes the ATP-dependent 2-thiolation of cytidine in position 32 of tRNA, to form 2-thiocytidine (s(2)C32). The sulfur atoms are provided by the cysteine/cysteine desulfurase (IscS) system.</text>
</comment>
<comment type="catalytic activity">
    <reaction evidence="1">
        <text>cytidine(32) in tRNA + S-sulfanyl-L-cysteinyl-[cysteine desulfurase] + AH2 + ATP = 2-thiocytidine(32) in tRNA + L-cysteinyl-[cysteine desulfurase] + A + AMP + diphosphate + H(+)</text>
        <dbReference type="Rhea" id="RHEA:57048"/>
        <dbReference type="Rhea" id="RHEA-COMP:10288"/>
        <dbReference type="Rhea" id="RHEA-COMP:12157"/>
        <dbReference type="Rhea" id="RHEA-COMP:12158"/>
        <dbReference type="Rhea" id="RHEA-COMP:14821"/>
        <dbReference type="ChEBI" id="CHEBI:13193"/>
        <dbReference type="ChEBI" id="CHEBI:15378"/>
        <dbReference type="ChEBI" id="CHEBI:17499"/>
        <dbReference type="ChEBI" id="CHEBI:29950"/>
        <dbReference type="ChEBI" id="CHEBI:30616"/>
        <dbReference type="ChEBI" id="CHEBI:33019"/>
        <dbReference type="ChEBI" id="CHEBI:61963"/>
        <dbReference type="ChEBI" id="CHEBI:82748"/>
        <dbReference type="ChEBI" id="CHEBI:141453"/>
        <dbReference type="ChEBI" id="CHEBI:456215"/>
    </reaction>
    <physiologicalReaction direction="left-to-right" evidence="1">
        <dbReference type="Rhea" id="RHEA:57049"/>
    </physiologicalReaction>
</comment>
<comment type="cofactor">
    <cofactor evidence="1">
        <name>Mg(2+)</name>
        <dbReference type="ChEBI" id="CHEBI:18420"/>
    </cofactor>
</comment>
<comment type="cofactor">
    <cofactor evidence="1">
        <name>[4Fe-4S] cluster</name>
        <dbReference type="ChEBI" id="CHEBI:49883"/>
    </cofactor>
    <text evidence="1">Binds 1 [4Fe-4S] cluster per subunit. The cluster is chelated by three Cys residues, the fourth Fe has a free coordination site that may bind a sulfur atom transferred from the persulfide of IscS.</text>
</comment>
<comment type="pathway">
    <text evidence="1">tRNA modification.</text>
</comment>
<comment type="subunit">
    <text evidence="1">Homodimer.</text>
</comment>
<comment type="subcellular location">
    <subcellularLocation>
        <location evidence="1">Cytoplasm</location>
    </subcellularLocation>
</comment>
<comment type="miscellaneous">
    <text evidence="1">The thiolation reaction likely consists of two steps: a first activation step by ATP to form an adenylated intermediate of the target base of tRNA, and a second nucleophilic substitution step of the sulfur (S) atom supplied by the hydrosulfide attached to the Fe-S cluster.</text>
</comment>
<comment type="similarity">
    <text evidence="1">Belongs to the TtcA family.</text>
</comment>
<name>TTCA_PSEAB</name>
<protein>
    <recommendedName>
        <fullName evidence="1">tRNA-cytidine(32) 2-sulfurtransferase</fullName>
        <ecNumber evidence="1">2.8.1.-</ecNumber>
    </recommendedName>
    <alternativeName>
        <fullName evidence="1">Two-thiocytidine biosynthesis protein A</fullName>
    </alternativeName>
    <alternativeName>
        <fullName evidence="1">tRNA 2-thiocytidine biosynthesis protein TtcA</fullName>
    </alternativeName>
</protein>
<reference key="1">
    <citation type="journal article" date="2006" name="Genome Biol.">
        <title>Genomic analysis reveals that Pseudomonas aeruginosa virulence is combinatorial.</title>
        <authorList>
            <person name="Lee D.G."/>
            <person name="Urbach J.M."/>
            <person name="Wu G."/>
            <person name="Liberati N.T."/>
            <person name="Feinbaum R.L."/>
            <person name="Miyata S."/>
            <person name="Diggins L.T."/>
            <person name="He J."/>
            <person name="Saucier M."/>
            <person name="Deziel E."/>
            <person name="Friedman L."/>
            <person name="Li L."/>
            <person name="Grills G."/>
            <person name="Montgomery K."/>
            <person name="Kucherlapati R."/>
            <person name="Rahme L.G."/>
            <person name="Ausubel F.M."/>
        </authorList>
    </citation>
    <scope>NUCLEOTIDE SEQUENCE [LARGE SCALE GENOMIC DNA]</scope>
    <source>
        <strain>UCBPP-PA14</strain>
    </source>
</reference>
<keyword id="KW-0004">4Fe-4S</keyword>
<keyword id="KW-0067">ATP-binding</keyword>
<keyword id="KW-0963">Cytoplasm</keyword>
<keyword id="KW-0408">Iron</keyword>
<keyword id="KW-0411">Iron-sulfur</keyword>
<keyword id="KW-0460">Magnesium</keyword>
<keyword id="KW-0479">Metal-binding</keyword>
<keyword id="KW-0547">Nucleotide-binding</keyword>
<keyword id="KW-0694">RNA-binding</keyword>
<keyword id="KW-0808">Transferase</keyword>
<keyword id="KW-0819">tRNA processing</keyword>
<keyword id="KW-0820">tRNA-binding</keyword>
<dbReference type="EC" id="2.8.1.-" evidence="1"/>
<dbReference type="EMBL" id="CP000438">
    <property type="protein sequence ID" value="ABJ10376.1"/>
    <property type="molecule type" value="Genomic_DNA"/>
</dbReference>
<dbReference type="RefSeq" id="WP_003082462.1">
    <property type="nucleotide sequence ID" value="NZ_CP034244.1"/>
</dbReference>
<dbReference type="SMR" id="Q02J28"/>
<dbReference type="GeneID" id="77222218"/>
<dbReference type="KEGG" id="pau:PA14_48870"/>
<dbReference type="PseudoCAP" id="PA14_48870"/>
<dbReference type="HOGENOM" id="CLU_026481_0_0_6"/>
<dbReference type="BioCyc" id="PAER208963:G1G74-4100-MONOMER"/>
<dbReference type="Proteomes" id="UP000000653">
    <property type="component" value="Chromosome"/>
</dbReference>
<dbReference type="GO" id="GO:0005737">
    <property type="term" value="C:cytoplasm"/>
    <property type="evidence" value="ECO:0007669"/>
    <property type="project" value="UniProtKB-SubCell"/>
</dbReference>
<dbReference type="GO" id="GO:0051539">
    <property type="term" value="F:4 iron, 4 sulfur cluster binding"/>
    <property type="evidence" value="ECO:0007669"/>
    <property type="project" value="UniProtKB-UniRule"/>
</dbReference>
<dbReference type="GO" id="GO:0005524">
    <property type="term" value="F:ATP binding"/>
    <property type="evidence" value="ECO:0007669"/>
    <property type="project" value="UniProtKB-UniRule"/>
</dbReference>
<dbReference type="GO" id="GO:0000287">
    <property type="term" value="F:magnesium ion binding"/>
    <property type="evidence" value="ECO:0007669"/>
    <property type="project" value="UniProtKB-UniRule"/>
</dbReference>
<dbReference type="GO" id="GO:0016783">
    <property type="term" value="F:sulfurtransferase activity"/>
    <property type="evidence" value="ECO:0007669"/>
    <property type="project" value="UniProtKB-UniRule"/>
</dbReference>
<dbReference type="GO" id="GO:0000049">
    <property type="term" value="F:tRNA binding"/>
    <property type="evidence" value="ECO:0007669"/>
    <property type="project" value="UniProtKB-KW"/>
</dbReference>
<dbReference type="GO" id="GO:0034227">
    <property type="term" value="P:tRNA thio-modification"/>
    <property type="evidence" value="ECO:0007669"/>
    <property type="project" value="UniProtKB-UniRule"/>
</dbReference>
<dbReference type="CDD" id="cd24138">
    <property type="entry name" value="TtcA-like"/>
    <property type="match status" value="1"/>
</dbReference>
<dbReference type="Gene3D" id="3.40.50.620">
    <property type="entry name" value="HUPs"/>
    <property type="match status" value="1"/>
</dbReference>
<dbReference type="HAMAP" id="MF_01850">
    <property type="entry name" value="TtcA"/>
    <property type="match status" value="1"/>
</dbReference>
<dbReference type="InterPro" id="IPR014729">
    <property type="entry name" value="Rossmann-like_a/b/a_fold"/>
</dbReference>
<dbReference type="InterPro" id="IPR011063">
    <property type="entry name" value="TilS/TtcA_N"/>
</dbReference>
<dbReference type="InterPro" id="IPR012089">
    <property type="entry name" value="tRNA_Cyd_32_2_STrfase"/>
</dbReference>
<dbReference type="InterPro" id="IPR035107">
    <property type="entry name" value="tRNA_thiolation_TtcA_Ctu1"/>
</dbReference>
<dbReference type="NCBIfam" id="NF007972">
    <property type="entry name" value="PRK10696.1"/>
    <property type="match status" value="1"/>
</dbReference>
<dbReference type="PANTHER" id="PTHR43686:SF1">
    <property type="entry name" value="AMINOTRAN_5 DOMAIN-CONTAINING PROTEIN"/>
    <property type="match status" value="1"/>
</dbReference>
<dbReference type="PANTHER" id="PTHR43686">
    <property type="entry name" value="SULFURTRANSFERASE-RELATED"/>
    <property type="match status" value="1"/>
</dbReference>
<dbReference type="Pfam" id="PF01171">
    <property type="entry name" value="ATP_bind_3"/>
    <property type="match status" value="1"/>
</dbReference>
<dbReference type="PIRSF" id="PIRSF004976">
    <property type="entry name" value="ATPase_YdaO"/>
    <property type="match status" value="1"/>
</dbReference>
<dbReference type="SUPFAM" id="SSF52402">
    <property type="entry name" value="Adenine nucleotide alpha hydrolases-like"/>
    <property type="match status" value="1"/>
</dbReference>
<sequence>MGTLSVNQNKLQKRLRRLAGEAITDFNMIEDGDKVMVCLSGGKDSYTMLDILLYLQKVAPIRFEIVAVNMDQKQPGFPEHVLPEYLKSIGVEYHIVEKDTYSVVKEKIPEGKTTCSLCSRLRRGTLYTFADEIGATKMALGHHRDDILETFFLNMFYGGTLKAMPPKLLADDGRNVVIRPLAYCSEKDIEAYSQLKEFPIIPCNLCGSQENLQRQVVKEMLLEWERKSPGRTEIMFRALQNVVPSQLADRNLFDFANLRIDENATPRFLDVMNL</sequence>
<proteinExistence type="inferred from homology"/>